<protein>
    <recommendedName>
        <fullName evidence="1">GTPase Der</fullName>
    </recommendedName>
    <alternativeName>
        <fullName evidence="1">GTP-binding protein EngA</fullName>
    </alternativeName>
</protein>
<dbReference type="EMBL" id="CP000253">
    <property type="protein sequence ID" value="ABD30577.1"/>
    <property type="molecule type" value="Genomic_DNA"/>
</dbReference>
<dbReference type="RefSeq" id="WP_000165530.1">
    <property type="nucleotide sequence ID" value="NZ_LS483365.1"/>
</dbReference>
<dbReference type="RefSeq" id="YP_500010.1">
    <property type="nucleotide sequence ID" value="NC_007795.1"/>
</dbReference>
<dbReference type="SMR" id="Q2FYG0"/>
<dbReference type="STRING" id="93061.SAOUHSC_01492"/>
<dbReference type="PaxDb" id="1280-SAXN108_1496"/>
<dbReference type="GeneID" id="3920247"/>
<dbReference type="KEGG" id="sao:SAOUHSC_01492"/>
<dbReference type="PATRIC" id="fig|93061.5.peg.1360"/>
<dbReference type="eggNOG" id="COG1160">
    <property type="taxonomic scope" value="Bacteria"/>
</dbReference>
<dbReference type="HOGENOM" id="CLU_016077_6_2_9"/>
<dbReference type="OrthoDB" id="9805918at2"/>
<dbReference type="PRO" id="PR:Q2FYG0"/>
<dbReference type="Proteomes" id="UP000008816">
    <property type="component" value="Chromosome"/>
</dbReference>
<dbReference type="GO" id="GO:0005525">
    <property type="term" value="F:GTP binding"/>
    <property type="evidence" value="ECO:0007669"/>
    <property type="project" value="UniProtKB-UniRule"/>
</dbReference>
<dbReference type="GO" id="GO:0043022">
    <property type="term" value="F:ribosome binding"/>
    <property type="evidence" value="ECO:0000318"/>
    <property type="project" value="GO_Central"/>
</dbReference>
<dbReference type="GO" id="GO:0042254">
    <property type="term" value="P:ribosome biogenesis"/>
    <property type="evidence" value="ECO:0007669"/>
    <property type="project" value="UniProtKB-KW"/>
</dbReference>
<dbReference type="CDD" id="cd01894">
    <property type="entry name" value="EngA1"/>
    <property type="match status" value="1"/>
</dbReference>
<dbReference type="CDD" id="cd01895">
    <property type="entry name" value="EngA2"/>
    <property type="match status" value="1"/>
</dbReference>
<dbReference type="FunFam" id="3.30.300.20:FF:000004">
    <property type="entry name" value="GTPase Der"/>
    <property type="match status" value="1"/>
</dbReference>
<dbReference type="FunFam" id="3.40.50.300:FF:000040">
    <property type="entry name" value="GTPase Der"/>
    <property type="match status" value="1"/>
</dbReference>
<dbReference type="FunFam" id="3.40.50.300:FF:000057">
    <property type="entry name" value="GTPase Der"/>
    <property type="match status" value="1"/>
</dbReference>
<dbReference type="Gene3D" id="3.30.300.20">
    <property type="match status" value="1"/>
</dbReference>
<dbReference type="Gene3D" id="3.40.50.300">
    <property type="entry name" value="P-loop containing nucleotide triphosphate hydrolases"/>
    <property type="match status" value="2"/>
</dbReference>
<dbReference type="HAMAP" id="MF_00195">
    <property type="entry name" value="GTPase_Der"/>
    <property type="match status" value="1"/>
</dbReference>
<dbReference type="InterPro" id="IPR031166">
    <property type="entry name" value="G_ENGA"/>
</dbReference>
<dbReference type="InterPro" id="IPR006073">
    <property type="entry name" value="GTP-bd"/>
</dbReference>
<dbReference type="InterPro" id="IPR016484">
    <property type="entry name" value="GTPase_Der"/>
</dbReference>
<dbReference type="InterPro" id="IPR032859">
    <property type="entry name" value="KH_dom-like"/>
</dbReference>
<dbReference type="InterPro" id="IPR015946">
    <property type="entry name" value="KH_dom-like_a/b"/>
</dbReference>
<dbReference type="InterPro" id="IPR027417">
    <property type="entry name" value="P-loop_NTPase"/>
</dbReference>
<dbReference type="InterPro" id="IPR005225">
    <property type="entry name" value="Small_GTP-bd"/>
</dbReference>
<dbReference type="NCBIfam" id="TIGR03594">
    <property type="entry name" value="GTPase_EngA"/>
    <property type="match status" value="1"/>
</dbReference>
<dbReference type="NCBIfam" id="TIGR00231">
    <property type="entry name" value="small_GTP"/>
    <property type="match status" value="2"/>
</dbReference>
<dbReference type="PANTHER" id="PTHR43834">
    <property type="entry name" value="GTPASE DER"/>
    <property type="match status" value="1"/>
</dbReference>
<dbReference type="PANTHER" id="PTHR43834:SF6">
    <property type="entry name" value="GTPASE DER"/>
    <property type="match status" value="1"/>
</dbReference>
<dbReference type="Pfam" id="PF14714">
    <property type="entry name" value="KH_dom-like"/>
    <property type="match status" value="1"/>
</dbReference>
<dbReference type="Pfam" id="PF01926">
    <property type="entry name" value="MMR_HSR1"/>
    <property type="match status" value="2"/>
</dbReference>
<dbReference type="PIRSF" id="PIRSF006485">
    <property type="entry name" value="GTP-binding_EngA"/>
    <property type="match status" value="1"/>
</dbReference>
<dbReference type="PRINTS" id="PR00326">
    <property type="entry name" value="GTP1OBG"/>
</dbReference>
<dbReference type="SUPFAM" id="SSF52540">
    <property type="entry name" value="P-loop containing nucleoside triphosphate hydrolases"/>
    <property type="match status" value="2"/>
</dbReference>
<dbReference type="PROSITE" id="PS51712">
    <property type="entry name" value="G_ENGA"/>
    <property type="match status" value="2"/>
</dbReference>
<evidence type="ECO:0000255" key="1">
    <source>
        <dbReference type="HAMAP-Rule" id="MF_00195"/>
    </source>
</evidence>
<accession>Q2FYG0</accession>
<comment type="function">
    <text evidence="1">GTPase that plays an essential role in the late steps of ribosome biogenesis.</text>
</comment>
<comment type="subunit">
    <text evidence="1">Associates with the 50S ribosomal subunit.</text>
</comment>
<comment type="similarity">
    <text evidence="1">Belongs to the TRAFAC class TrmE-Era-EngA-EngB-Septin-like GTPase superfamily. EngA (Der) GTPase family.</text>
</comment>
<feature type="chain" id="PRO_1000011748" description="GTPase Der">
    <location>
        <begin position="1"/>
        <end position="436"/>
    </location>
</feature>
<feature type="domain" description="EngA-type G 1">
    <location>
        <begin position="4"/>
        <end position="167"/>
    </location>
</feature>
<feature type="domain" description="EngA-type G 2">
    <location>
        <begin position="176"/>
        <end position="351"/>
    </location>
</feature>
<feature type="domain" description="KH-like" evidence="1">
    <location>
        <begin position="352"/>
        <end position="436"/>
    </location>
</feature>
<feature type="binding site" evidence="1">
    <location>
        <begin position="10"/>
        <end position="17"/>
    </location>
    <ligand>
        <name>GTP</name>
        <dbReference type="ChEBI" id="CHEBI:37565"/>
        <label>1</label>
    </ligand>
</feature>
<feature type="binding site" evidence="1">
    <location>
        <begin position="57"/>
        <end position="61"/>
    </location>
    <ligand>
        <name>GTP</name>
        <dbReference type="ChEBI" id="CHEBI:37565"/>
        <label>1</label>
    </ligand>
</feature>
<feature type="binding site" evidence="1">
    <location>
        <begin position="119"/>
        <end position="122"/>
    </location>
    <ligand>
        <name>GTP</name>
        <dbReference type="ChEBI" id="CHEBI:37565"/>
        <label>1</label>
    </ligand>
</feature>
<feature type="binding site" evidence="1">
    <location>
        <begin position="182"/>
        <end position="189"/>
    </location>
    <ligand>
        <name>GTP</name>
        <dbReference type="ChEBI" id="CHEBI:37565"/>
        <label>2</label>
    </ligand>
</feature>
<feature type="binding site" evidence="1">
    <location>
        <begin position="229"/>
        <end position="233"/>
    </location>
    <ligand>
        <name>GTP</name>
        <dbReference type="ChEBI" id="CHEBI:37565"/>
        <label>2</label>
    </ligand>
</feature>
<feature type="binding site" evidence="1">
    <location>
        <begin position="294"/>
        <end position="297"/>
    </location>
    <ligand>
        <name>GTP</name>
        <dbReference type="ChEBI" id="CHEBI:37565"/>
        <label>2</label>
    </ligand>
</feature>
<name>DER_STAA8</name>
<reference key="1">
    <citation type="book" date="2006" name="Gram positive pathogens, 2nd edition">
        <title>The Staphylococcus aureus NCTC 8325 genome.</title>
        <editorList>
            <person name="Fischetti V."/>
            <person name="Novick R."/>
            <person name="Ferretti J."/>
            <person name="Portnoy D."/>
            <person name="Rood J."/>
        </editorList>
        <authorList>
            <person name="Gillaspy A.F."/>
            <person name="Worrell V."/>
            <person name="Orvis J."/>
            <person name="Roe B.A."/>
            <person name="Dyer D.W."/>
            <person name="Iandolo J.J."/>
        </authorList>
    </citation>
    <scope>NUCLEOTIDE SEQUENCE [LARGE SCALE GENOMIC DNA]</scope>
    <source>
        <strain>NCTC 8325 / PS 47</strain>
    </source>
</reference>
<gene>
    <name evidence="1" type="primary">der</name>
    <name type="synonym">engA</name>
    <name type="ordered locus">SAOUHSC_01492</name>
</gene>
<organism>
    <name type="scientific">Staphylococcus aureus (strain NCTC 8325 / PS 47)</name>
    <dbReference type="NCBI Taxonomy" id="93061"/>
    <lineage>
        <taxon>Bacteria</taxon>
        <taxon>Bacillati</taxon>
        <taxon>Bacillota</taxon>
        <taxon>Bacilli</taxon>
        <taxon>Bacillales</taxon>
        <taxon>Staphylococcaceae</taxon>
        <taxon>Staphylococcus</taxon>
    </lineage>
</organism>
<proteinExistence type="inferred from homology"/>
<sequence length="436" mass="48980">MTKPIVAIVGRPNVGKSTIFNRIVGERVSIVEDTPGVTRDRIYSSGEWLTHDFNIIDTGGIEIGDAPFQTQIRAQAEIAIDEADVIIFMVNVREGLTQSDEMVAQILYKSKKPVVLAVNKVDNMEMRTDVYDFYSLGFGEPYPISGSHGLGLGDLLDAVVSHFGEEEEDPYDEDTIRLSIIGRPNVGKSSLVNAILGEDRVIVSNVAGTTRDAIDTEYSYDGQDYVLIDTAGMRKKGKVYESTEKYSVLRALKAIERSNVVLVVIDAEQGIIEQDKRVAGYAHEQGKAVVIVVNKWDTVEKDSKTMKKFEDEVRKEFQFLDYAQIAFVSAKERTRLRTLFPYINEASENHKKRVQSSTLNEVVTDAISMNPTPTDKGRRLNVFYATQVAIEPPTFVVFVNDVELMHFSYKRYLENQIRAAFGFEGTPIHIIARKRN</sequence>
<keyword id="KW-0342">GTP-binding</keyword>
<keyword id="KW-0547">Nucleotide-binding</keyword>
<keyword id="KW-1185">Reference proteome</keyword>
<keyword id="KW-0677">Repeat</keyword>
<keyword id="KW-0690">Ribosome biogenesis</keyword>